<organism>
    <name type="scientific">Shigella flexneri</name>
    <dbReference type="NCBI Taxonomy" id="623"/>
    <lineage>
        <taxon>Bacteria</taxon>
        <taxon>Pseudomonadati</taxon>
        <taxon>Pseudomonadota</taxon>
        <taxon>Gammaproteobacteria</taxon>
        <taxon>Enterobacterales</taxon>
        <taxon>Enterobacteriaceae</taxon>
        <taxon>Shigella</taxon>
    </lineage>
</organism>
<sequence length="623" mass="69086">MPHSDELDAGNVLAVENLNIAFMQDQQKIAAVRNLSFSLQRGETLAIVGESGSGKSVTALALMRLLEQAGGLVQCDKMLLRRRSRDVIELSEQSAAQMRHVRGADMAMIFQEPMTSLNPVFTVGEQIAESIRLHQNASREEAMVEAKRMLDQVRIPEAQTILSRYSHQLSGGMRQRVMIAMALSCRPAVLIADEPTTALDVTIQAQILQLIKVLQKEMSMGVIFITHDMGVVAEIADRVLVMYQGEAVETGTVEQIFHAPQHPYTRALLAAVPQLGAMKGLDYPRRFPLISLEHPAKQEPPIEQKTVVDGEPVLRVRNLVTRFPLRSGLLNRVTREVHAVEKVSFDLWPGETLSLVGESGSGKSTTGRALLRLVESQGGEIIFNGQRIDTLSPGKLQALRRDIQFIFQDPYASLDPRQTIGDSIIEPLRVHGLLPGKDAAARVAWLLERVGLLPEHAWRYPHEFSGGQRQRICIARALALNPKVIIADEAVSALDVSIRGQIINLLLDLQRDFGIAYLFISHDMAVVERISHRVAVMYLGQIVEIGSRCAVFENPQHPYTRKLLAAVPVAEPSRQRPQRVLLSDDLPSNIHLRGEEVAAVSLQCVGPGHYVAQPQSEYAFMRR</sequence>
<feature type="chain" id="PRO_0000280029" description="Glutathione import ATP-binding protein GsiA">
    <location>
        <begin position="1"/>
        <end position="623"/>
    </location>
</feature>
<feature type="domain" description="ABC transporter 1" evidence="2">
    <location>
        <begin position="15"/>
        <end position="269"/>
    </location>
</feature>
<feature type="domain" description="ABC transporter 2" evidence="2">
    <location>
        <begin position="314"/>
        <end position="564"/>
    </location>
</feature>
<feature type="binding site" evidence="2">
    <location>
        <begin position="49"/>
        <end position="56"/>
    </location>
    <ligand>
        <name>ATP</name>
        <dbReference type="ChEBI" id="CHEBI:30616"/>
    </ligand>
</feature>
<feature type="binding site" evidence="2">
    <location>
        <begin position="357"/>
        <end position="364"/>
    </location>
    <ligand>
        <name>ATP</name>
        <dbReference type="ChEBI" id="CHEBI:30616"/>
    </ligand>
</feature>
<proteinExistence type="inferred from homology"/>
<dbReference type="EC" id="7.4.2.10" evidence="1"/>
<dbReference type="EMBL" id="AE005674">
    <property type="protein sequence ID" value="AAN42413.2"/>
    <property type="status" value="ALT_INIT"/>
    <property type="molecule type" value="Genomic_DNA"/>
</dbReference>
<dbReference type="EMBL" id="AE014073">
    <property type="protein sequence ID" value="AAP16289.1"/>
    <property type="status" value="ALT_INIT"/>
    <property type="molecule type" value="Genomic_DNA"/>
</dbReference>
<dbReference type="RefSeq" id="NP_706706.2">
    <property type="nucleotide sequence ID" value="NC_004337.2"/>
</dbReference>
<dbReference type="RefSeq" id="WP_001120569.1">
    <property type="nucleotide sequence ID" value="NZ_WPGW01000058.1"/>
</dbReference>
<dbReference type="SMR" id="Q83LT3"/>
<dbReference type="STRING" id="198214.SF0779"/>
<dbReference type="PaxDb" id="198214-SF0779"/>
<dbReference type="GeneID" id="1023721"/>
<dbReference type="KEGG" id="sfl:SF0779"/>
<dbReference type="KEGG" id="sfx:S0822"/>
<dbReference type="PATRIC" id="fig|198214.7.peg.904"/>
<dbReference type="HOGENOM" id="CLU_000604_86_2_6"/>
<dbReference type="Proteomes" id="UP000001006">
    <property type="component" value="Chromosome"/>
</dbReference>
<dbReference type="Proteomes" id="UP000002673">
    <property type="component" value="Chromosome"/>
</dbReference>
<dbReference type="GO" id="GO:0005886">
    <property type="term" value="C:plasma membrane"/>
    <property type="evidence" value="ECO:0007669"/>
    <property type="project" value="UniProtKB-SubCell"/>
</dbReference>
<dbReference type="GO" id="GO:0005524">
    <property type="term" value="F:ATP binding"/>
    <property type="evidence" value="ECO:0007669"/>
    <property type="project" value="UniProtKB-KW"/>
</dbReference>
<dbReference type="GO" id="GO:0016887">
    <property type="term" value="F:ATP hydrolysis activity"/>
    <property type="evidence" value="ECO:0007669"/>
    <property type="project" value="InterPro"/>
</dbReference>
<dbReference type="GO" id="GO:0015833">
    <property type="term" value="P:peptide transport"/>
    <property type="evidence" value="ECO:0007669"/>
    <property type="project" value="InterPro"/>
</dbReference>
<dbReference type="GO" id="GO:0055085">
    <property type="term" value="P:transmembrane transport"/>
    <property type="evidence" value="ECO:0007669"/>
    <property type="project" value="UniProtKB-ARBA"/>
</dbReference>
<dbReference type="CDD" id="cd03257">
    <property type="entry name" value="ABC_NikE_OppD_transporters"/>
    <property type="match status" value="2"/>
</dbReference>
<dbReference type="FunFam" id="3.40.50.300:FF:001061">
    <property type="entry name" value="Glutathione import ATP-binding protein GsiA"/>
    <property type="match status" value="1"/>
</dbReference>
<dbReference type="FunFam" id="3.40.50.300:FF:000016">
    <property type="entry name" value="Oligopeptide ABC transporter ATP-binding component"/>
    <property type="match status" value="1"/>
</dbReference>
<dbReference type="Gene3D" id="3.40.50.300">
    <property type="entry name" value="P-loop containing nucleotide triphosphate hydrolases"/>
    <property type="match status" value="2"/>
</dbReference>
<dbReference type="InterPro" id="IPR003593">
    <property type="entry name" value="AAA+_ATPase"/>
</dbReference>
<dbReference type="InterPro" id="IPR050319">
    <property type="entry name" value="ABC_transp_ATP-bind"/>
</dbReference>
<dbReference type="InterPro" id="IPR003439">
    <property type="entry name" value="ABC_transporter-like_ATP-bd"/>
</dbReference>
<dbReference type="InterPro" id="IPR017871">
    <property type="entry name" value="ABC_transporter-like_CS"/>
</dbReference>
<dbReference type="InterPro" id="IPR013563">
    <property type="entry name" value="Oligopep_ABC_C"/>
</dbReference>
<dbReference type="InterPro" id="IPR027417">
    <property type="entry name" value="P-loop_NTPase"/>
</dbReference>
<dbReference type="NCBIfam" id="NF007613">
    <property type="entry name" value="PRK10261.1"/>
    <property type="match status" value="1"/>
</dbReference>
<dbReference type="NCBIfam" id="NF007739">
    <property type="entry name" value="PRK10419.1"/>
    <property type="match status" value="2"/>
</dbReference>
<dbReference type="NCBIfam" id="NF008453">
    <property type="entry name" value="PRK11308.1"/>
    <property type="match status" value="2"/>
</dbReference>
<dbReference type="PANTHER" id="PTHR43776:SF15">
    <property type="entry name" value="GLUTATHIONE IMPORT ATP-BINDING PROTEIN GSIA"/>
    <property type="match status" value="1"/>
</dbReference>
<dbReference type="PANTHER" id="PTHR43776">
    <property type="entry name" value="TRANSPORT ATP-BINDING PROTEIN"/>
    <property type="match status" value="1"/>
</dbReference>
<dbReference type="Pfam" id="PF00005">
    <property type="entry name" value="ABC_tran"/>
    <property type="match status" value="2"/>
</dbReference>
<dbReference type="Pfam" id="PF08352">
    <property type="entry name" value="oligo_HPY"/>
    <property type="match status" value="2"/>
</dbReference>
<dbReference type="SMART" id="SM00382">
    <property type="entry name" value="AAA"/>
    <property type="match status" value="2"/>
</dbReference>
<dbReference type="SUPFAM" id="SSF52540">
    <property type="entry name" value="P-loop containing nucleoside triphosphate hydrolases"/>
    <property type="match status" value="2"/>
</dbReference>
<dbReference type="PROSITE" id="PS00211">
    <property type="entry name" value="ABC_TRANSPORTER_1"/>
    <property type="match status" value="2"/>
</dbReference>
<dbReference type="PROSITE" id="PS50893">
    <property type="entry name" value="ABC_TRANSPORTER_2"/>
    <property type="match status" value="2"/>
</dbReference>
<comment type="function">
    <text evidence="1">Part of the ABC transporter complex GsiABCD involved in glutathione import. Responsible for energy coupling to the transport system.</text>
</comment>
<comment type="catalytic activity">
    <reaction evidence="1">
        <text>glutathione(out) + ATP + H2O = glutathione(in) + ADP + phosphate + H(+)</text>
        <dbReference type="Rhea" id="RHEA:29791"/>
        <dbReference type="ChEBI" id="CHEBI:15377"/>
        <dbReference type="ChEBI" id="CHEBI:15378"/>
        <dbReference type="ChEBI" id="CHEBI:30616"/>
        <dbReference type="ChEBI" id="CHEBI:43474"/>
        <dbReference type="ChEBI" id="CHEBI:57925"/>
        <dbReference type="ChEBI" id="CHEBI:456216"/>
        <dbReference type="EC" id="7.4.2.10"/>
    </reaction>
</comment>
<comment type="subunit">
    <text evidence="1">The complex is composed of two ATP-binding proteins (GsiA), two transmembrane proteins (GsiC and GsiD) and a solute-binding protein (GsiB).</text>
</comment>
<comment type="subcellular location">
    <subcellularLocation>
        <location evidence="1">Cell inner membrane</location>
        <topology evidence="1">Peripheral membrane protein</topology>
    </subcellularLocation>
</comment>
<comment type="similarity">
    <text evidence="3">Belongs to the ABC transporter superfamily. Glutathione importer (TC 3.A.1.5.11) family.</text>
</comment>
<comment type="sequence caution" evidence="3">
    <conflict type="erroneous initiation">
        <sequence resource="EMBL-CDS" id="AAN42413"/>
    </conflict>
</comment>
<comment type="sequence caution" evidence="3">
    <conflict type="erroneous initiation">
        <sequence resource="EMBL-CDS" id="AAP16289"/>
    </conflict>
</comment>
<evidence type="ECO:0000250" key="1">
    <source>
        <dbReference type="UniProtKB" id="P75796"/>
    </source>
</evidence>
<evidence type="ECO:0000255" key="2">
    <source>
        <dbReference type="PROSITE-ProRule" id="PRU00434"/>
    </source>
</evidence>
<evidence type="ECO:0000305" key="3"/>
<name>GSIA_SHIFL</name>
<reference key="1">
    <citation type="journal article" date="2002" name="Nucleic Acids Res.">
        <title>Genome sequence of Shigella flexneri 2a: insights into pathogenicity through comparison with genomes of Escherichia coli K12 and O157.</title>
        <authorList>
            <person name="Jin Q."/>
            <person name="Yuan Z."/>
            <person name="Xu J."/>
            <person name="Wang Y."/>
            <person name="Shen Y."/>
            <person name="Lu W."/>
            <person name="Wang J."/>
            <person name="Liu H."/>
            <person name="Yang J."/>
            <person name="Yang F."/>
            <person name="Zhang X."/>
            <person name="Zhang J."/>
            <person name="Yang G."/>
            <person name="Wu H."/>
            <person name="Qu D."/>
            <person name="Dong J."/>
            <person name="Sun L."/>
            <person name="Xue Y."/>
            <person name="Zhao A."/>
            <person name="Gao Y."/>
            <person name="Zhu J."/>
            <person name="Kan B."/>
            <person name="Ding K."/>
            <person name="Chen S."/>
            <person name="Cheng H."/>
            <person name="Yao Z."/>
            <person name="He B."/>
            <person name="Chen R."/>
            <person name="Ma D."/>
            <person name="Qiang B."/>
            <person name="Wen Y."/>
            <person name="Hou Y."/>
            <person name="Yu J."/>
        </authorList>
    </citation>
    <scope>NUCLEOTIDE SEQUENCE [LARGE SCALE GENOMIC DNA]</scope>
    <source>
        <strain>301 / Serotype 2a</strain>
    </source>
</reference>
<reference key="2">
    <citation type="journal article" date="2003" name="Infect. Immun.">
        <title>Complete genome sequence and comparative genomics of Shigella flexneri serotype 2a strain 2457T.</title>
        <authorList>
            <person name="Wei J."/>
            <person name="Goldberg M.B."/>
            <person name="Burland V."/>
            <person name="Venkatesan M.M."/>
            <person name="Deng W."/>
            <person name="Fournier G."/>
            <person name="Mayhew G.F."/>
            <person name="Plunkett G. III"/>
            <person name="Rose D.J."/>
            <person name="Darling A."/>
            <person name="Mau B."/>
            <person name="Perna N.T."/>
            <person name="Payne S.M."/>
            <person name="Runyen-Janecky L.J."/>
            <person name="Zhou S."/>
            <person name="Schwartz D.C."/>
            <person name="Blattner F.R."/>
        </authorList>
    </citation>
    <scope>NUCLEOTIDE SEQUENCE [LARGE SCALE GENOMIC DNA]</scope>
    <source>
        <strain>ATCC 700930 / 2457T / Serotype 2a</strain>
    </source>
</reference>
<protein>
    <recommendedName>
        <fullName evidence="1">Glutathione import ATP-binding protein GsiA</fullName>
        <ecNumber evidence="1">7.4.2.10</ecNumber>
    </recommendedName>
</protein>
<gene>
    <name evidence="1" type="primary">gsiA</name>
    <name type="ordered locus">SF0779</name>
    <name type="ordered locus">S0822</name>
</gene>
<accession>Q83LT3</accession>
<accession>Q7UD85</accession>
<keyword id="KW-0067">ATP-binding</keyword>
<keyword id="KW-0997">Cell inner membrane</keyword>
<keyword id="KW-1003">Cell membrane</keyword>
<keyword id="KW-0378">Hydrolase</keyword>
<keyword id="KW-0472">Membrane</keyword>
<keyword id="KW-0547">Nucleotide-binding</keyword>
<keyword id="KW-1185">Reference proteome</keyword>
<keyword id="KW-0677">Repeat</keyword>
<keyword id="KW-1278">Translocase</keyword>
<keyword id="KW-0813">Transport</keyword>